<gene>
    <name evidence="1" type="primary">namA</name>
    <name type="ordered locus">lin2614</name>
</gene>
<evidence type="ECO:0000255" key="1">
    <source>
        <dbReference type="HAMAP-Rule" id="MF_01614"/>
    </source>
</evidence>
<organism>
    <name type="scientific">Listeria innocua serovar 6a (strain ATCC BAA-680 / CLIP 11262)</name>
    <dbReference type="NCBI Taxonomy" id="272626"/>
    <lineage>
        <taxon>Bacteria</taxon>
        <taxon>Bacillati</taxon>
        <taxon>Bacillota</taxon>
        <taxon>Bacilli</taxon>
        <taxon>Bacillales</taxon>
        <taxon>Listeriaceae</taxon>
        <taxon>Listeria</taxon>
    </lineage>
</organism>
<reference key="1">
    <citation type="journal article" date="2001" name="Science">
        <title>Comparative genomics of Listeria species.</title>
        <authorList>
            <person name="Glaser P."/>
            <person name="Frangeul L."/>
            <person name="Buchrieser C."/>
            <person name="Rusniok C."/>
            <person name="Amend A."/>
            <person name="Baquero F."/>
            <person name="Berche P."/>
            <person name="Bloecker H."/>
            <person name="Brandt P."/>
            <person name="Chakraborty T."/>
            <person name="Charbit A."/>
            <person name="Chetouani F."/>
            <person name="Couve E."/>
            <person name="de Daruvar A."/>
            <person name="Dehoux P."/>
            <person name="Domann E."/>
            <person name="Dominguez-Bernal G."/>
            <person name="Duchaud E."/>
            <person name="Durant L."/>
            <person name="Dussurget O."/>
            <person name="Entian K.-D."/>
            <person name="Fsihi H."/>
            <person name="Garcia-del Portillo F."/>
            <person name="Garrido P."/>
            <person name="Gautier L."/>
            <person name="Goebel W."/>
            <person name="Gomez-Lopez N."/>
            <person name="Hain T."/>
            <person name="Hauf J."/>
            <person name="Jackson D."/>
            <person name="Jones L.-M."/>
            <person name="Kaerst U."/>
            <person name="Kreft J."/>
            <person name="Kuhn M."/>
            <person name="Kunst F."/>
            <person name="Kurapkat G."/>
            <person name="Madueno E."/>
            <person name="Maitournam A."/>
            <person name="Mata Vicente J."/>
            <person name="Ng E."/>
            <person name="Nedjari H."/>
            <person name="Nordsiek G."/>
            <person name="Novella S."/>
            <person name="de Pablos B."/>
            <person name="Perez-Diaz J.-C."/>
            <person name="Purcell R."/>
            <person name="Remmel B."/>
            <person name="Rose M."/>
            <person name="Schlueter T."/>
            <person name="Simoes N."/>
            <person name="Tierrez A."/>
            <person name="Vazquez-Boland J.-A."/>
            <person name="Voss H."/>
            <person name="Wehland J."/>
            <person name="Cossart P."/>
        </authorList>
    </citation>
    <scope>NUCLEOTIDE SEQUENCE [LARGE SCALE GENOMIC DNA]</scope>
    <source>
        <strain>ATCC BAA-680 / CLIP 11262</strain>
    </source>
</reference>
<keyword id="KW-0216">Detoxification</keyword>
<keyword id="KW-0285">Flavoprotein</keyword>
<keyword id="KW-0288">FMN</keyword>
<keyword id="KW-0521">NADP</keyword>
<keyword id="KW-0560">Oxidoreductase</keyword>
<name>NAMA_LISIN</name>
<feature type="chain" id="PRO_0000216122" description="NADPH dehydrogenase">
    <location>
        <begin position="1"/>
        <end position="338"/>
    </location>
</feature>
<feature type="binding site" evidence="1">
    <location>
        <begin position="22"/>
        <end position="25"/>
    </location>
    <ligand>
        <name>FMN</name>
        <dbReference type="ChEBI" id="CHEBI:58210"/>
    </ligand>
</feature>
<feature type="binding site" evidence="1">
    <location>
        <position position="27"/>
    </location>
    <ligand>
        <name>substrate</name>
    </ligand>
</feature>
<feature type="binding site" evidence="1">
    <location>
        <position position="59"/>
    </location>
    <ligand>
        <name>FMN</name>
        <dbReference type="ChEBI" id="CHEBI:58210"/>
    </ligand>
</feature>
<feature type="binding site" evidence="1">
    <location>
        <position position="101"/>
    </location>
    <ligand>
        <name>FMN</name>
        <dbReference type="ChEBI" id="CHEBI:58210"/>
    </ligand>
</feature>
<feature type="binding site" evidence="1">
    <location>
        <begin position="163"/>
        <end position="166"/>
    </location>
    <ligand>
        <name>substrate</name>
    </ligand>
</feature>
<feature type="binding site" evidence="1">
    <location>
        <position position="214"/>
    </location>
    <ligand>
        <name>FMN</name>
        <dbReference type="ChEBI" id="CHEBI:58210"/>
    </ligand>
</feature>
<feature type="binding site" evidence="1">
    <location>
        <begin position="306"/>
        <end position="307"/>
    </location>
    <ligand>
        <name>FMN</name>
        <dbReference type="ChEBI" id="CHEBI:58210"/>
    </ligand>
</feature>
<comment type="function">
    <text evidence="1">Catalyzes the reduction of the double bond of an array of alpha,beta-unsaturated aldehydes and ketones. It also reduces the nitro group of nitroester and nitroaromatic compounds. It could have a role in detoxification processes.</text>
</comment>
<comment type="catalytic activity">
    <reaction evidence="1">
        <text>A + NADPH + H(+) = AH2 + NADP(+)</text>
        <dbReference type="Rhea" id="RHEA:13149"/>
        <dbReference type="ChEBI" id="CHEBI:13193"/>
        <dbReference type="ChEBI" id="CHEBI:15378"/>
        <dbReference type="ChEBI" id="CHEBI:17499"/>
        <dbReference type="ChEBI" id="CHEBI:57783"/>
        <dbReference type="ChEBI" id="CHEBI:58349"/>
        <dbReference type="EC" id="1.6.99.1"/>
    </reaction>
</comment>
<comment type="cofactor">
    <cofactor evidence="1">
        <name>FMN</name>
        <dbReference type="ChEBI" id="CHEBI:58210"/>
    </cofactor>
</comment>
<comment type="subunit">
    <text evidence="1">Homotetramer.</text>
</comment>
<comment type="similarity">
    <text evidence="1">Belongs to the NADH:flavin oxidoreductase/NADH oxidase family. NamA subfamily.</text>
</comment>
<sequence length="338" mass="37120">MSKLFSEYKLKDVTLKNRIVMSPMCMYSVENKDGIATDFHFAHYVSRAAGGTGLVILEATAVQEVGRISEFDLGLWNDEQVPALKRLVDGLHYHGAKAGIQLAHAGRKAVLPGEIVAPSAIPFDEKSAKPVELTKEAIKEVVADFKRAAYRAKEAGFDVIEIHAAHGYLIHQFLSPISNRREDNYGGPAGNRYKILSDIIKAVKEVWDGPIIVRVSATDYAHGGLQLEDHIPFAKWMKADGVELIDVSTGGLVNVEPPVFPGYQVPFADEIRRGAGIATGALGLITRGEQAEEILCNERADLIIIGRELLRNPYFAKEAAETLGETIEAPKQYSRAWK</sequence>
<dbReference type="EC" id="1.6.99.1" evidence="1"/>
<dbReference type="EMBL" id="AL596173">
    <property type="protein sequence ID" value="CAC97841.1"/>
    <property type="molecule type" value="Genomic_DNA"/>
</dbReference>
<dbReference type="PIR" id="AI1758">
    <property type="entry name" value="AI1758"/>
</dbReference>
<dbReference type="RefSeq" id="WP_010991300.1">
    <property type="nucleotide sequence ID" value="NC_003212.1"/>
</dbReference>
<dbReference type="SMR" id="Q928C2"/>
<dbReference type="STRING" id="272626.gene:17566995"/>
<dbReference type="KEGG" id="lin:lin2614"/>
<dbReference type="eggNOG" id="COG1902">
    <property type="taxonomic scope" value="Bacteria"/>
</dbReference>
<dbReference type="HOGENOM" id="CLU_012153_2_1_9"/>
<dbReference type="OrthoDB" id="9772736at2"/>
<dbReference type="Proteomes" id="UP000002513">
    <property type="component" value="Chromosome"/>
</dbReference>
<dbReference type="GO" id="GO:0009274">
    <property type="term" value="C:peptidoglycan-based cell wall"/>
    <property type="evidence" value="ECO:0000314"/>
    <property type="project" value="CAFA"/>
</dbReference>
<dbReference type="GO" id="GO:0010181">
    <property type="term" value="F:FMN binding"/>
    <property type="evidence" value="ECO:0007669"/>
    <property type="project" value="UniProtKB-UniRule"/>
</dbReference>
<dbReference type="GO" id="GO:0050661">
    <property type="term" value="F:NADP binding"/>
    <property type="evidence" value="ECO:0007669"/>
    <property type="project" value="UniProtKB-UniRule"/>
</dbReference>
<dbReference type="GO" id="GO:0003959">
    <property type="term" value="F:NADPH dehydrogenase activity"/>
    <property type="evidence" value="ECO:0007669"/>
    <property type="project" value="UniProtKB-UniRule"/>
</dbReference>
<dbReference type="GO" id="GO:0009636">
    <property type="term" value="P:response to toxic substance"/>
    <property type="evidence" value="ECO:0007669"/>
    <property type="project" value="UniProtKB-KW"/>
</dbReference>
<dbReference type="CDD" id="cd02932">
    <property type="entry name" value="OYE_YqiM_FMN"/>
    <property type="match status" value="1"/>
</dbReference>
<dbReference type="FunFam" id="3.20.20.70:FF:000299">
    <property type="entry name" value="NADPH dehydrogenase"/>
    <property type="match status" value="1"/>
</dbReference>
<dbReference type="Gene3D" id="3.20.20.70">
    <property type="entry name" value="Aldolase class I"/>
    <property type="match status" value="1"/>
</dbReference>
<dbReference type="HAMAP" id="MF_01614">
    <property type="entry name" value="NamA"/>
    <property type="match status" value="1"/>
</dbReference>
<dbReference type="InterPro" id="IPR013785">
    <property type="entry name" value="Aldolase_TIM"/>
</dbReference>
<dbReference type="InterPro" id="IPR023663">
    <property type="entry name" value="NADPH_DH_bac"/>
</dbReference>
<dbReference type="InterPro" id="IPR001155">
    <property type="entry name" value="OxRdtase_FMN_N"/>
</dbReference>
<dbReference type="InterPro" id="IPR044152">
    <property type="entry name" value="YqjM-like"/>
</dbReference>
<dbReference type="NCBIfam" id="NF010047">
    <property type="entry name" value="PRK13523.1"/>
    <property type="match status" value="1"/>
</dbReference>
<dbReference type="PANTHER" id="PTHR43303">
    <property type="entry name" value="NADPH DEHYDROGENASE C23G7.10C-RELATED"/>
    <property type="match status" value="1"/>
</dbReference>
<dbReference type="PANTHER" id="PTHR43303:SF4">
    <property type="entry name" value="NADPH DEHYDROGENASE C23G7.10C-RELATED"/>
    <property type="match status" value="1"/>
</dbReference>
<dbReference type="Pfam" id="PF00724">
    <property type="entry name" value="Oxidored_FMN"/>
    <property type="match status" value="1"/>
</dbReference>
<dbReference type="SUPFAM" id="SSF51395">
    <property type="entry name" value="FMN-linked oxidoreductases"/>
    <property type="match status" value="1"/>
</dbReference>
<proteinExistence type="inferred from homology"/>
<accession>Q928C2</accession>
<protein>
    <recommendedName>
        <fullName evidence="1">NADPH dehydrogenase</fullName>
        <ecNumber evidence="1">1.6.99.1</ecNumber>
    </recommendedName>
</protein>